<name>RUVA_METFK</name>
<keyword id="KW-0963">Cytoplasm</keyword>
<keyword id="KW-0227">DNA damage</keyword>
<keyword id="KW-0233">DNA recombination</keyword>
<keyword id="KW-0234">DNA repair</keyword>
<keyword id="KW-0238">DNA-binding</keyword>
<keyword id="KW-1185">Reference proteome</keyword>
<protein>
    <recommendedName>
        <fullName evidence="1">Holliday junction branch migration complex subunit RuvA</fullName>
    </recommendedName>
</protein>
<accession>Q1GYR7</accession>
<reference key="1">
    <citation type="submission" date="2006-03" db="EMBL/GenBank/DDBJ databases">
        <title>Complete sequence of Methylobacillus flagellatus KT.</title>
        <authorList>
            <consortium name="US DOE Joint Genome Institute"/>
            <person name="Copeland A."/>
            <person name="Lucas S."/>
            <person name="Lapidus A."/>
            <person name="Barry K."/>
            <person name="Detter J.C."/>
            <person name="Glavina del Rio T."/>
            <person name="Hammon N."/>
            <person name="Israni S."/>
            <person name="Dalin E."/>
            <person name="Tice H."/>
            <person name="Pitluck S."/>
            <person name="Brettin T."/>
            <person name="Bruce D."/>
            <person name="Han C."/>
            <person name="Tapia R."/>
            <person name="Saunders E."/>
            <person name="Gilna P."/>
            <person name="Schmutz J."/>
            <person name="Larimer F."/>
            <person name="Land M."/>
            <person name="Kyrpides N."/>
            <person name="Anderson I."/>
            <person name="Richardson P."/>
        </authorList>
    </citation>
    <scope>NUCLEOTIDE SEQUENCE [LARGE SCALE GENOMIC DNA]</scope>
    <source>
        <strain>ATCC 51484 / DSM 6875 / VKM B-1610 / KT</strain>
    </source>
</reference>
<gene>
    <name evidence="1" type="primary">ruvA</name>
    <name type="ordered locus">Mfla_2353</name>
</gene>
<organism>
    <name type="scientific">Methylobacillus flagellatus (strain ATCC 51484 / DSM 6875 / VKM B-1610 / KT)</name>
    <dbReference type="NCBI Taxonomy" id="265072"/>
    <lineage>
        <taxon>Bacteria</taxon>
        <taxon>Pseudomonadati</taxon>
        <taxon>Pseudomonadota</taxon>
        <taxon>Betaproteobacteria</taxon>
        <taxon>Nitrosomonadales</taxon>
        <taxon>Methylophilaceae</taxon>
        <taxon>Methylobacillus</taxon>
    </lineage>
</organism>
<sequence length="194" mass="20435">MIARLSGILVEKTPPQVVIDCHGVGYECEVPMSTFYNLPATGEKVVLLTQFIVREDAQLLYGFGSDQERATFRQLLKVNGVGAKSALAILSGLSVDDLAQAVALQETGLLIKVPGIGKKTAERLLLELKDKFAIDGGTALAGSNPAKSASSDVLNALLALGYNEREALAAVKQLPADIAVAEGIKLSLKSLSKT</sequence>
<proteinExistence type="inferred from homology"/>
<dbReference type="EMBL" id="CP000284">
    <property type="protein sequence ID" value="ABE50620.1"/>
    <property type="molecule type" value="Genomic_DNA"/>
</dbReference>
<dbReference type="RefSeq" id="WP_011480573.1">
    <property type="nucleotide sequence ID" value="NC_007947.1"/>
</dbReference>
<dbReference type="SMR" id="Q1GYR7"/>
<dbReference type="STRING" id="265072.Mfla_2353"/>
<dbReference type="KEGG" id="mfa:Mfla_2353"/>
<dbReference type="eggNOG" id="COG0632">
    <property type="taxonomic scope" value="Bacteria"/>
</dbReference>
<dbReference type="HOGENOM" id="CLU_087936_0_0_4"/>
<dbReference type="OrthoDB" id="5293449at2"/>
<dbReference type="Proteomes" id="UP000002440">
    <property type="component" value="Chromosome"/>
</dbReference>
<dbReference type="GO" id="GO:0005737">
    <property type="term" value="C:cytoplasm"/>
    <property type="evidence" value="ECO:0007669"/>
    <property type="project" value="UniProtKB-SubCell"/>
</dbReference>
<dbReference type="GO" id="GO:0009379">
    <property type="term" value="C:Holliday junction helicase complex"/>
    <property type="evidence" value="ECO:0007669"/>
    <property type="project" value="InterPro"/>
</dbReference>
<dbReference type="GO" id="GO:0048476">
    <property type="term" value="C:Holliday junction resolvase complex"/>
    <property type="evidence" value="ECO:0007669"/>
    <property type="project" value="UniProtKB-UniRule"/>
</dbReference>
<dbReference type="GO" id="GO:0005524">
    <property type="term" value="F:ATP binding"/>
    <property type="evidence" value="ECO:0007669"/>
    <property type="project" value="InterPro"/>
</dbReference>
<dbReference type="GO" id="GO:0000400">
    <property type="term" value="F:four-way junction DNA binding"/>
    <property type="evidence" value="ECO:0007669"/>
    <property type="project" value="UniProtKB-UniRule"/>
</dbReference>
<dbReference type="GO" id="GO:0009378">
    <property type="term" value="F:four-way junction helicase activity"/>
    <property type="evidence" value="ECO:0007669"/>
    <property type="project" value="InterPro"/>
</dbReference>
<dbReference type="GO" id="GO:0006310">
    <property type="term" value="P:DNA recombination"/>
    <property type="evidence" value="ECO:0007669"/>
    <property type="project" value="UniProtKB-UniRule"/>
</dbReference>
<dbReference type="GO" id="GO:0006281">
    <property type="term" value="P:DNA repair"/>
    <property type="evidence" value="ECO:0007669"/>
    <property type="project" value="UniProtKB-UniRule"/>
</dbReference>
<dbReference type="CDD" id="cd14332">
    <property type="entry name" value="UBA_RuvA_C"/>
    <property type="match status" value="1"/>
</dbReference>
<dbReference type="Gene3D" id="1.10.150.20">
    <property type="entry name" value="5' to 3' exonuclease, C-terminal subdomain"/>
    <property type="match status" value="1"/>
</dbReference>
<dbReference type="Gene3D" id="1.10.8.10">
    <property type="entry name" value="DNA helicase RuvA subunit, C-terminal domain"/>
    <property type="match status" value="1"/>
</dbReference>
<dbReference type="Gene3D" id="2.40.50.140">
    <property type="entry name" value="Nucleic acid-binding proteins"/>
    <property type="match status" value="1"/>
</dbReference>
<dbReference type="HAMAP" id="MF_00031">
    <property type="entry name" value="DNA_HJ_migration_RuvA"/>
    <property type="match status" value="1"/>
</dbReference>
<dbReference type="InterPro" id="IPR013849">
    <property type="entry name" value="DNA_helicase_Holl-junc_RuvA_I"/>
</dbReference>
<dbReference type="InterPro" id="IPR003583">
    <property type="entry name" value="Hlx-hairpin-Hlx_DNA-bd_motif"/>
</dbReference>
<dbReference type="InterPro" id="IPR012340">
    <property type="entry name" value="NA-bd_OB-fold"/>
</dbReference>
<dbReference type="InterPro" id="IPR000085">
    <property type="entry name" value="RuvA"/>
</dbReference>
<dbReference type="InterPro" id="IPR010994">
    <property type="entry name" value="RuvA_2-like"/>
</dbReference>
<dbReference type="InterPro" id="IPR011114">
    <property type="entry name" value="RuvA_C"/>
</dbReference>
<dbReference type="InterPro" id="IPR036267">
    <property type="entry name" value="RuvA_C_sf"/>
</dbReference>
<dbReference type="NCBIfam" id="TIGR00084">
    <property type="entry name" value="ruvA"/>
    <property type="match status" value="1"/>
</dbReference>
<dbReference type="Pfam" id="PF14520">
    <property type="entry name" value="HHH_5"/>
    <property type="match status" value="1"/>
</dbReference>
<dbReference type="Pfam" id="PF07499">
    <property type="entry name" value="RuvA_C"/>
    <property type="match status" value="1"/>
</dbReference>
<dbReference type="Pfam" id="PF01330">
    <property type="entry name" value="RuvA_N"/>
    <property type="match status" value="1"/>
</dbReference>
<dbReference type="SMART" id="SM00278">
    <property type="entry name" value="HhH1"/>
    <property type="match status" value="2"/>
</dbReference>
<dbReference type="SUPFAM" id="SSF46929">
    <property type="entry name" value="DNA helicase RuvA subunit, C-terminal domain"/>
    <property type="match status" value="1"/>
</dbReference>
<dbReference type="SUPFAM" id="SSF50249">
    <property type="entry name" value="Nucleic acid-binding proteins"/>
    <property type="match status" value="1"/>
</dbReference>
<dbReference type="SUPFAM" id="SSF47781">
    <property type="entry name" value="RuvA domain 2-like"/>
    <property type="match status" value="1"/>
</dbReference>
<evidence type="ECO:0000255" key="1">
    <source>
        <dbReference type="HAMAP-Rule" id="MF_00031"/>
    </source>
</evidence>
<feature type="chain" id="PRO_1000002484" description="Holliday junction branch migration complex subunit RuvA">
    <location>
        <begin position="1"/>
        <end position="194"/>
    </location>
</feature>
<feature type="region of interest" description="Domain I" evidence="1">
    <location>
        <begin position="1"/>
        <end position="64"/>
    </location>
</feature>
<feature type="region of interest" description="Domain II" evidence="1">
    <location>
        <begin position="65"/>
        <end position="141"/>
    </location>
</feature>
<feature type="region of interest" description="Flexible linker" evidence="1">
    <location>
        <begin position="141"/>
        <end position="144"/>
    </location>
</feature>
<feature type="region of interest" description="Domain III" evidence="1">
    <location>
        <begin position="145"/>
        <end position="194"/>
    </location>
</feature>
<comment type="function">
    <text evidence="1">The RuvA-RuvB-RuvC complex processes Holliday junction (HJ) DNA during genetic recombination and DNA repair, while the RuvA-RuvB complex plays an important role in the rescue of blocked DNA replication forks via replication fork reversal (RFR). RuvA specifically binds to HJ cruciform DNA, conferring on it an open structure. The RuvB hexamer acts as an ATP-dependent pump, pulling dsDNA into and through the RuvAB complex. HJ branch migration allows RuvC to scan DNA until it finds its consensus sequence, where it cleaves and resolves the cruciform DNA.</text>
</comment>
<comment type="subunit">
    <text evidence="1">Homotetramer. Forms an RuvA(8)-RuvB(12)-Holliday junction (HJ) complex. HJ DNA is sandwiched between 2 RuvA tetramers; dsDNA enters through RuvA and exits via RuvB. An RuvB hexamer assembles on each DNA strand where it exits the tetramer. Each RuvB hexamer is contacted by two RuvA subunits (via domain III) on 2 adjacent RuvB subunits; this complex drives branch migration. In the full resolvosome a probable DNA-RuvA(4)-RuvB(12)-RuvC(2) complex forms which resolves the HJ.</text>
</comment>
<comment type="subcellular location">
    <subcellularLocation>
        <location evidence="1">Cytoplasm</location>
    </subcellularLocation>
</comment>
<comment type="domain">
    <text evidence="1">Has three domains with a flexible linker between the domains II and III and assumes an 'L' shape. Domain III is highly mobile and contacts RuvB.</text>
</comment>
<comment type="similarity">
    <text evidence="1">Belongs to the RuvA family.</text>
</comment>